<sequence length="212" mass="23397">MSLFDKKHLVTQADALPGRNTPMPIATLHAVNEHSMTNVPAGMEIAYFAMGCFWGVERLFWQLPGVYSTAAGYAGGYTPNPTYREVCSGQTGHAEAVRIVYDPAVISYEQLLQTFWENHDPTQGMQQGNDHGTQYRSAIYPLTPEQNAAAHASRERFQSAMTAAGDHRPITTEIAHATPFYYAEDEHQQYLHKNPYGYCGIGGIGVCLPPDA</sequence>
<feature type="chain" id="PRO_1000145434" description="Peptide methionine sulfoxide reductase MsrA">
    <location>
        <begin position="1"/>
        <end position="212"/>
    </location>
</feature>
<feature type="active site" evidence="1">
    <location>
        <position position="52"/>
    </location>
</feature>
<proteinExistence type="inferred from homology"/>
<protein>
    <recommendedName>
        <fullName evidence="1">Peptide methionine sulfoxide reductase MsrA</fullName>
        <shortName evidence="1">Protein-methionine-S-oxide reductase</shortName>
        <ecNumber evidence="1">1.8.4.11</ecNumber>
    </recommendedName>
    <alternativeName>
        <fullName evidence="1">Peptide-methionine (S)-S-oxide reductase</fullName>
        <shortName evidence="1">Peptide Met(O) reductase</shortName>
    </alternativeName>
</protein>
<reference key="1">
    <citation type="journal article" date="2011" name="J. Bacteriol.">
        <title>Comparative genomics of 28 Salmonella enterica isolates: evidence for CRISPR-mediated adaptive sublineage evolution.</title>
        <authorList>
            <person name="Fricke W.F."/>
            <person name="Mammel M.K."/>
            <person name="McDermott P.F."/>
            <person name="Tartera C."/>
            <person name="White D.G."/>
            <person name="Leclerc J.E."/>
            <person name="Ravel J."/>
            <person name="Cebula T.A."/>
        </authorList>
    </citation>
    <scope>NUCLEOTIDE SEQUENCE [LARGE SCALE GENOMIC DNA]</scope>
    <source>
        <strain>SL254</strain>
    </source>
</reference>
<organism>
    <name type="scientific">Salmonella newport (strain SL254)</name>
    <dbReference type="NCBI Taxonomy" id="423368"/>
    <lineage>
        <taxon>Bacteria</taxon>
        <taxon>Pseudomonadati</taxon>
        <taxon>Pseudomonadota</taxon>
        <taxon>Gammaproteobacteria</taxon>
        <taxon>Enterobacterales</taxon>
        <taxon>Enterobacteriaceae</taxon>
        <taxon>Salmonella</taxon>
    </lineage>
</organism>
<name>MSRA_SALNS</name>
<comment type="function">
    <text evidence="1">Has an important function as a repair enzyme for proteins that have been inactivated by oxidation. Catalyzes the reversible oxidation-reduction of methionine sulfoxide in proteins to methionine.</text>
</comment>
<comment type="catalytic activity">
    <reaction evidence="1">
        <text>L-methionyl-[protein] + [thioredoxin]-disulfide + H2O = L-methionyl-(S)-S-oxide-[protein] + [thioredoxin]-dithiol</text>
        <dbReference type="Rhea" id="RHEA:14217"/>
        <dbReference type="Rhea" id="RHEA-COMP:10698"/>
        <dbReference type="Rhea" id="RHEA-COMP:10700"/>
        <dbReference type="Rhea" id="RHEA-COMP:12313"/>
        <dbReference type="Rhea" id="RHEA-COMP:12315"/>
        <dbReference type="ChEBI" id="CHEBI:15377"/>
        <dbReference type="ChEBI" id="CHEBI:16044"/>
        <dbReference type="ChEBI" id="CHEBI:29950"/>
        <dbReference type="ChEBI" id="CHEBI:44120"/>
        <dbReference type="ChEBI" id="CHEBI:50058"/>
        <dbReference type="EC" id="1.8.4.11"/>
    </reaction>
</comment>
<comment type="catalytic activity">
    <reaction evidence="1">
        <text>[thioredoxin]-disulfide + L-methionine + H2O = L-methionine (S)-S-oxide + [thioredoxin]-dithiol</text>
        <dbReference type="Rhea" id="RHEA:19993"/>
        <dbReference type="Rhea" id="RHEA-COMP:10698"/>
        <dbReference type="Rhea" id="RHEA-COMP:10700"/>
        <dbReference type="ChEBI" id="CHEBI:15377"/>
        <dbReference type="ChEBI" id="CHEBI:29950"/>
        <dbReference type="ChEBI" id="CHEBI:50058"/>
        <dbReference type="ChEBI" id="CHEBI:57844"/>
        <dbReference type="ChEBI" id="CHEBI:58772"/>
        <dbReference type="EC" id="1.8.4.11"/>
    </reaction>
</comment>
<comment type="similarity">
    <text evidence="1">Belongs to the MsrA Met sulfoxide reductase family.</text>
</comment>
<dbReference type="EC" id="1.8.4.11" evidence="1"/>
<dbReference type="EMBL" id="CP001113">
    <property type="protein sequence ID" value="ACF62331.1"/>
    <property type="molecule type" value="Genomic_DNA"/>
</dbReference>
<dbReference type="RefSeq" id="WP_000051472.1">
    <property type="nucleotide sequence ID" value="NZ_CCMR01000003.1"/>
</dbReference>
<dbReference type="SMR" id="B4T3H1"/>
<dbReference type="KEGG" id="see:SNSL254_A4772"/>
<dbReference type="HOGENOM" id="CLU_031040_10_3_6"/>
<dbReference type="Proteomes" id="UP000008824">
    <property type="component" value="Chromosome"/>
</dbReference>
<dbReference type="GO" id="GO:0005737">
    <property type="term" value="C:cytoplasm"/>
    <property type="evidence" value="ECO:0007669"/>
    <property type="project" value="TreeGrafter"/>
</dbReference>
<dbReference type="GO" id="GO:0036456">
    <property type="term" value="F:L-methionine-(S)-S-oxide reductase activity"/>
    <property type="evidence" value="ECO:0007669"/>
    <property type="project" value="TreeGrafter"/>
</dbReference>
<dbReference type="GO" id="GO:0008113">
    <property type="term" value="F:peptide-methionine (S)-S-oxide reductase activity"/>
    <property type="evidence" value="ECO:0007669"/>
    <property type="project" value="UniProtKB-UniRule"/>
</dbReference>
<dbReference type="GO" id="GO:0034599">
    <property type="term" value="P:cellular response to oxidative stress"/>
    <property type="evidence" value="ECO:0007669"/>
    <property type="project" value="TreeGrafter"/>
</dbReference>
<dbReference type="GO" id="GO:0036211">
    <property type="term" value="P:protein modification process"/>
    <property type="evidence" value="ECO:0007669"/>
    <property type="project" value="UniProtKB-UniRule"/>
</dbReference>
<dbReference type="FunFam" id="3.30.1060.10:FF:000001">
    <property type="entry name" value="Peptide methionine sulfoxide reductase MsrA"/>
    <property type="match status" value="1"/>
</dbReference>
<dbReference type="Gene3D" id="3.30.1060.10">
    <property type="entry name" value="Peptide methionine sulphoxide reductase MsrA"/>
    <property type="match status" value="1"/>
</dbReference>
<dbReference type="HAMAP" id="MF_01401">
    <property type="entry name" value="MsrA"/>
    <property type="match status" value="1"/>
</dbReference>
<dbReference type="InterPro" id="IPR002569">
    <property type="entry name" value="Met_Sox_Rdtase_MsrA_dom"/>
</dbReference>
<dbReference type="InterPro" id="IPR036509">
    <property type="entry name" value="Met_Sox_Rdtase_MsrA_sf"/>
</dbReference>
<dbReference type="InterPro" id="IPR050162">
    <property type="entry name" value="MsrA_MetSO_reductase"/>
</dbReference>
<dbReference type="NCBIfam" id="TIGR00401">
    <property type="entry name" value="msrA"/>
    <property type="match status" value="1"/>
</dbReference>
<dbReference type="PANTHER" id="PTHR42799">
    <property type="entry name" value="MITOCHONDRIAL PEPTIDE METHIONINE SULFOXIDE REDUCTASE"/>
    <property type="match status" value="1"/>
</dbReference>
<dbReference type="PANTHER" id="PTHR42799:SF2">
    <property type="entry name" value="MITOCHONDRIAL PEPTIDE METHIONINE SULFOXIDE REDUCTASE"/>
    <property type="match status" value="1"/>
</dbReference>
<dbReference type="Pfam" id="PF01625">
    <property type="entry name" value="PMSR"/>
    <property type="match status" value="1"/>
</dbReference>
<dbReference type="SUPFAM" id="SSF55068">
    <property type="entry name" value="Peptide methionine sulfoxide reductase"/>
    <property type="match status" value="1"/>
</dbReference>
<keyword id="KW-0560">Oxidoreductase</keyword>
<accession>B4T3H1</accession>
<gene>
    <name evidence="1" type="primary">msrA</name>
    <name type="ordered locus">SNSL254_A4772</name>
</gene>
<evidence type="ECO:0000255" key="1">
    <source>
        <dbReference type="HAMAP-Rule" id="MF_01401"/>
    </source>
</evidence>